<dbReference type="EMBL" id="AF149297">
    <property type="protein sequence ID" value="AAF34820.1"/>
    <property type="status" value="ALT_SEQ"/>
    <property type="molecule type" value="mRNA"/>
</dbReference>
<dbReference type="EMBL" id="AF188239">
    <property type="protein sequence ID" value="AAG29055.1"/>
    <property type="molecule type" value="mRNA"/>
</dbReference>
<dbReference type="EMBL" id="AF070572">
    <property type="protein sequence ID" value="AAC28644.1"/>
    <property type="status" value="ALT_INIT"/>
    <property type="molecule type" value="mRNA"/>
</dbReference>
<dbReference type="EMBL" id="AK074844">
    <property type="protein sequence ID" value="BAG52015.1"/>
    <property type="molecule type" value="mRNA"/>
</dbReference>
<dbReference type="EMBL" id="AL133410">
    <property type="status" value="NOT_ANNOTATED_CDS"/>
    <property type="molecule type" value="Genomic_DNA"/>
</dbReference>
<dbReference type="EMBL" id="CH471071">
    <property type="protein sequence ID" value="EAW58325.1"/>
    <property type="molecule type" value="Genomic_DNA"/>
</dbReference>
<dbReference type="EMBL" id="BC041377">
    <property type="status" value="NOT_ANNOTATED_CDS"/>
    <property type="molecule type" value="mRNA"/>
</dbReference>
<dbReference type="EMBL" id="BC098265">
    <property type="protein sequence ID" value="AAH98265.1"/>
    <property type="molecule type" value="mRNA"/>
</dbReference>
<dbReference type="EMBL" id="BC098296">
    <property type="protein sequence ID" value="AAH98296.1"/>
    <property type="molecule type" value="mRNA"/>
</dbReference>
<dbReference type="EMBL" id="BC099733">
    <property type="protein sequence ID" value="AAH99733.1"/>
    <property type="molecule type" value="mRNA"/>
</dbReference>
<dbReference type="CCDS" id="CCDS43800.1">
    <molecule id="A6NDV4-1"/>
</dbReference>
<dbReference type="CCDS" id="CCDS6595.1">
    <molecule id="A6NDV4-2"/>
</dbReference>
<dbReference type="RefSeq" id="NP_001036054.1">
    <molecule id="A6NDV4-1"/>
    <property type="nucleotide sequence ID" value="NM_001042589.3"/>
</dbReference>
<dbReference type="RefSeq" id="NP_001036055.1">
    <property type="nucleotide sequence ID" value="NM_001042590.2"/>
</dbReference>
<dbReference type="RefSeq" id="NP_001350550.1">
    <molecule id="A6NDV4-2"/>
    <property type="nucleotide sequence ID" value="NM_001363621.1"/>
</dbReference>
<dbReference type="RefSeq" id="NP_057530.2">
    <molecule id="A6NDV4-2"/>
    <property type="nucleotide sequence ID" value="NM_016446.3"/>
</dbReference>
<dbReference type="RefSeq" id="XP_047279428.1">
    <molecule id="A6NDV4-1"/>
    <property type="nucleotide sequence ID" value="XM_047423472.1"/>
</dbReference>
<dbReference type="RefSeq" id="XP_054219080.1">
    <molecule id="A6NDV4-1"/>
    <property type="nucleotide sequence ID" value="XM_054363105.1"/>
</dbReference>
<dbReference type="RefSeq" id="XP_054219082.1">
    <molecule id="A6NDV4-1"/>
    <property type="nucleotide sequence ID" value="XM_054363107.1"/>
</dbReference>
<dbReference type="SMR" id="A6NDV4"/>
<dbReference type="BioGRID" id="119714">
    <property type="interactions" value="12"/>
</dbReference>
<dbReference type="FunCoup" id="A6NDV4">
    <property type="interactions" value="279"/>
</dbReference>
<dbReference type="IntAct" id="A6NDV4">
    <property type="interactions" value="2"/>
</dbReference>
<dbReference type="MINT" id="A6NDV4"/>
<dbReference type="STRING" id="9606.ENSP00000367230"/>
<dbReference type="TCDB" id="1.N.2.1.7">
    <property type="family name" value="the myoblast fusion complex (mfc) family"/>
</dbReference>
<dbReference type="GlyCosmos" id="A6NDV4">
    <property type="glycosylation" value="2 sites, No reported glycans"/>
</dbReference>
<dbReference type="GlyGen" id="A6NDV4">
    <property type="glycosylation" value="3 sites"/>
</dbReference>
<dbReference type="iPTMnet" id="A6NDV4"/>
<dbReference type="PhosphoSitePlus" id="A6NDV4"/>
<dbReference type="BioMuta" id="TMEM8B"/>
<dbReference type="jPOST" id="A6NDV4"/>
<dbReference type="MassIVE" id="A6NDV4"/>
<dbReference type="PaxDb" id="9606-ENSP00000367227"/>
<dbReference type="PeptideAtlas" id="A6NDV4"/>
<dbReference type="ProteomicsDB" id="931">
    <molecule id="A6NDV4-1"/>
</dbReference>
<dbReference type="ProteomicsDB" id="932">
    <molecule id="A6NDV4-2"/>
</dbReference>
<dbReference type="ProteomicsDB" id="933">
    <molecule id="A6NDV4-3"/>
</dbReference>
<dbReference type="TopDownProteomics" id="A6NDV4-2">
    <molecule id="A6NDV4-2"/>
</dbReference>
<dbReference type="Antibodypedia" id="26101">
    <property type="antibodies" value="151 antibodies from 20 providers"/>
</dbReference>
<dbReference type="DNASU" id="51754"/>
<dbReference type="Ensembl" id="ENST00000377988.6">
    <molecule id="A6NDV4-1"/>
    <property type="protein sequence ID" value="ENSP00000367227.2"/>
    <property type="gene ID" value="ENSG00000137103.20"/>
</dbReference>
<dbReference type="Ensembl" id="ENST00000377991.9">
    <molecule id="A6NDV4-1"/>
    <property type="protein sequence ID" value="ENSP00000367230.4"/>
    <property type="gene ID" value="ENSG00000137103.20"/>
</dbReference>
<dbReference type="Ensembl" id="ENST00000377996.5">
    <molecule id="A6NDV4-2"/>
    <property type="protein sequence ID" value="ENSP00000367235.1"/>
    <property type="gene ID" value="ENSG00000137103.20"/>
</dbReference>
<dbReference type="Ensembl" id="ENST00000439587.6">
    <molecule id="A6NDV4-2"/>
    <property type="protein sequence ID" value="ENSP00000395810.2"/>
    <property type="gene ID" value="ENSG00000137103.20"/>
</dbReference>
<dbReference type="Ensembl" id="ENST00000650015.1">
    <molecule id="A6NDV4-1"/>
    <property type="protein sequence ID" value="ENSP00000497766.1"/>
    <property type="gene ID" value="ENSG00000137103.20"/>
</dbReference>
<dbReference type="GeneID" id="51754"/>
<dbReference type="KEGG" id="hsa:51754"/>
<dbReference type="UCSC" id="uc003zyk.4">
    <molecule id="A6NDV4-1"/>
    <property type="organism name" value="human"/>
</dbReference>
<dbReference type="AGR" id="HGNC:21427"/>
<dbReference type="CTD" id="51754"/>
<dbReference type="DisGeNET" id="51754"/>
<dbReference type="GeneCards" id="TMEM8B"/>
<dbReference type="HGNC" id="HGNC:21427">
    <property type="gene designation" value="TMEM8B"/>
</dbReference>
<dbReference type="HPA" id="ENSG00000137103">
    <property type="expression patterns" value="Low tissue specificity"/>
</dbReference>
<dbReference type="neXtProt" id="NX_A6NDV4"/>
<dbReference type="OpenTargets" id="ENSG00000137103"/>
<dbReference type="PharmGKB" id="PA165586305"/>
<dbReference type="VEuPathDB" id="HostDB:ENSG00000137103"/>
<dbReference type="eggNOG" id="ENOG502QQ7Q">
    <property type="taxonomic scope" value="Eukaryota"/>
</dbReference>
<dbReference type="GeneTree" id="ENSGT00940000157861"/>
<dbReference type="HOGENOM" id="CLU_823768_0_0_1"/>
<dbReference type="InParanoid" id="A6NDV4"/>
<dbReference type="OMA" id="PEDTMMA"/>
<dbReference type="OrthoDB" id="69646at2759"/>
<dbReference type="PAN-GO" id="A6NDV4">
    <property type="GO annotations" value="1 GO annotation based on evolutionary models"/>
</dbReference>
<dbReference type="PhylomeDB" id="A6NDV4"/>
<dbReference type="TreeFam" id="TF331003"/>
<dbReference type="PathwayCommons" id="A6NDV4"/>
<dbReference type="SignaLink" id="A6NDV4"/>
<dbReference type="BioGRID-ORCS" id="51754">
    <property type="hits" value="12 hits in 1161 CRISPR screens"/>
</dbReference>
<dbReference type="ChiTaRS" id="TMEM8B">
    <property type="organism name" value="human"/>
</dbReference>
<dbReference type="GeneWiki" id="C9orf127"/>
<dbReference type="GenomeRNAi" id="51754"/>
<dbReference type="Pharos" id="A6NDV4">
    <property type="development level" value="Tbio"/>
</dbReference>
<dbReference type="PRO" id="PR:A6NDV4"/>
<dbReference type="Proteomes" id="UP000005640">
    <property type="component" value="Chromosome 9"/>
</dbReference>
<dbReference type="RNAct" id="A6NDV4">
    <property type="molecule type" value="protein"/>
</dbReference>
<dbReference type="Bgee" id="ENSG00000137103">
    <property type="expression patterns" value="Expressed in left ovary and 146 other cell types or tissues"/>
</dbReference>
<dbReference type="ExpressionAtlas" id="A6NDV4">
    <property type="expression patterns" value="baseline and differential"/>
</dbReference>
<dbReference type="GO" id="GO:0009986">
    <property type="term" value="C:cell surface"/>
    <property type="evidence" value="ECO:0000314"/>
    <property type="project" value="HGNC-UCL"/>
</dbReference>
<dbReference type="GO" id="GO:0005783">
    <property type="term" value="C:endoplasmic reticulum"/>
    <property type="evidence" value="ECO:0007669"/>
    <property type="project" value="UniProtKB-SubCell"/>
</dbReference>
<dbReference type="GO" id="GO:0005739">
    <property type="term" value="C:mitochondrion"/>
    <property type="evidence" value="ECO:0007669"/>
    <property type="project" value="UniProtKB-SubCell"/>
</dbReference>
<dbReference type="GO" id="GO:0005634">
    <property type="term" value="C:nucleus"/>
    <property type="evidence" value="ECO:0007669"/>
    <property type="project" value="UniProtKB-SubCell"/>
</dbReference>
<dbReference type="GO" id="GO:0005886">
    <property type="term" value="C:plasma membrane"/>
    <property type="evidence" value="ECO:0000314"/>
    <property type="project" value="HGNC-UCL"/>
</dbReference>
<dbReference type="GO" id="GO:0007160">
    <property type="term" value="P:cell-matrix adhesion"/>
    <property type="evidence" value="ECO:0000315"/>
    <property type="project" value="HGNC-UCL"/>
</dbReference>
<dbReference type="GO" id="GO:0007346">
    <property type="term" value="P:regulation of mitotic cell cycle"/>
    <property type="evidence" value="ECO:0000304"/>
    <property type="project" value="HGNC-UCL"/>
</dbReference>
<dbReference type="InterPro" id="IPR000742">
    <property type="entry name" value="EGF-like_dom"/>
</dbReference>
<dbReference type="InterPro" id="IPR021910">
    <property type="entry name" value="NGX6/PGAP6/MYMK"/>
</dbReference>
<dbReference type="PANTHER" id="PTHR14319">
    <property type="entry name" value="FIVE-SPAN TRANSMEMBRANE PROTEIN M83"/>
    <property type="match status" value="1"/>
</dbReference>
<dbReference type="PANTHER" id="PTHR14319:SF6">
    <property type="entry name" value="TRANSMEMBRANE PROTEIN 8B"/>
    <property type="match status" value="1"/>
</dbReference>
<dbReference type="Pfam" id="PF12036">
    <property type="entry name" value="DUF3522"/>
    <property type="match status" value="1"/>
</dbReference>
<dbReference type="PROSITE" id="PS00022">
    <property type="entry name" value="EGF_1"/>
    <property type="match status" value="1"/>
</dbReference>
<dbReference type="PROSITE" id="PS01186">
    <property type="entry name" value="EGF_2"/>
    <property type="match status" value="1"/>
</dbReference>
<proteinExistence type="evidence at protein level"/>
<accession>A6NDV4</accession>
<accession>B3KQF3</accession>
<accession>O75539</accession>
<accession>Q49AB1</accession>
<accession>Q4KMX5</accession>
<accession>Q5TCW5</accession>
<accession>Q9HBY2</accession>
<accession>Q9P0U7</accession>
<gene>
    <name type="primary">TMEM8B</name>
    <name type="synonym">C9orf127</name>
    <name type="synonym">NGX6</name>
</gene>
<name>TMM8B_HUMAN</name>
<reference key="1">
    <citation type="journal article" date="2001" name="J. Protein Chem.">
        <title>Proteomic detection of changes in protein synthesis induced by NGX6 transfected in human nasopharyngeal carcinoma cells.</title>
        <authorList>
            <person name="Li J."/>
            <person name="Tan C."/>
            <person name="Xiang Q."/>
            <person name="Zhang X."/>
            <person name="Ma J."/>
            <person name="Wang J.-R."/>
            <person name="Yang J."/>
            <person name="Li W.-F."/>
            <person name="Shen S.-R."/>
            <person name="Liang S."/>
            <person name="Li G.-Y."/>
        </authorList>
    </citation>
    <scope>NUCLEOTIDE SEQUENCE [MRNA] (ISOFORM 2)</scope>
</reference>
<reference key="2">
    <citation type="submission" date="1998-06" db="EMBL/GenBank/DDBJ databases">
        <authorList>
            <person name="Yu W."/>
            <person name="Gibbs R.A."/>
        </authorList>
    </citation>
    <scope>NUCLEOTIDE SEQUENCE [LARGE SCALE MRNA] (ISOFORM 2)</scope>
    <source>
        <tissue>Brain</tissue>
    </source>
</reference>
<reference key="3">
    <citation type="journal article" date="2004" name="Nat. Genet.">
        <title>Complete sequencing and characterization of 21,243 full-length human cDNAs.</title>
        <authorList>
            <person name="Ota T."/>
            <person name="Suzuki Y."/>
            <person name="Nishikawa T."/>
            <person name="Otsuki T."/>
            <person name="Sugiyama T."/>
            <person name="Irie R."/>
            <person name="Wakamatsu A."/>
            <person name="Hayashi K."/>
            <person name="Sato H."/>
            <person name="Nagai K."/>
            <person name="Kimura K."/>
            <person name="Makita H."/>
            <person name="Sekine M."/>
            <person name="Obayashi M."/>
            <person name="Nishi T."/>
            <person name="Shibahara T."/>
            <person name="Tanaka T."/>
            <person name="Ishii S."/>
            <person name="Yamamoto J."/>
            <person name="Saito K."/>
            <person name="Kawai Y."/>
            <person name="Isono Y."/>
            <person name="Nakamura Y."/>
            <person name="Nagahari K."/>
            <person name="Murakami K."/>
            <person name="Yasuda T."/>
            <person name="Iwayanagi T."/>
            <person name="Wagatsuma M."/>
            <person name="Shiratori A."/>
            <person name="Sudo H."/>
            <person name="Hosoiri T."/>
            <person name="Kaku Y."/>
            <person name="Kodaira H."/>
            <person name="Kondo H."/>
            <person name="Sugawara M."/>
            <person name="Takahashi M."/>
            <person name="Kanda K."/>
            <person name="Yokoi T."/>
            <person name="Furuya T."/>
            <person name="Kikkawa E."/>
            <person name="Omura Y."/>
            <person name="Abe K."/>
            <person name="Kamihara K."/>
            <person name="Katsuta N."/>
            <person name="Sato K."/>
            <person name="Tanikawa M."/>
            <person name="Yamazaki M."/>
            <person name="Ninomiya K."/>
            <person name="Ishibashi T."/>
            <person name="Yamashita H."/>
            <person name="Murakawa K."/>
            <person name="Fujimori K."/>
            <person name="Tanai H."/>
            <person name="Kimata M."/>
            <person name="Watanabe M."/>
            <person name="Hiraoka S."/>
            <person name="Chiba Y."/>
            <person name="Ishida S."/>
            <person name="Ono Y."/>
            <person name="Takiguchi S."/>
            <person name="Watanabe S."/>
            <person name="Yosida M."/>
            <person name="Hotuta T."/>
            <person name="Kusano J."/>
            <person name="Kanehori K."/>
            <person name="Takahashi-Fujii A."/>
            <person name="Hara H."/>
            <person name="Tanase T.-O."/>
            <person name="Nomura Y."/>
            <person name="Togiya S."/>
            <person name="Komai F."/>
            <person name="Hara R."/>
            <person name="Takeuchi K."/>
            <person name="Arita M."/>
            <person name="Imose N."/>
            <person name="Musashino K."/>
            <person name="Yuuki H."/>
            <person name="Oshima A."/>
            <person name="Sasaki N."/>
            <person name="Aotsuka S."/>
            <person name="Yoshikawa Y."/>
            <person name="Matsunawa H."/>
            <person name="Ichihara T."/>
            <person name="Shiohata N."/>
            <person name="Sano S."/>
            <person name="Moriya S."/>
            <person name="Momiyama H."/>
            <person name="Satoh N."/>
            <person name="Takami S."/>
            <person name="Terashima Y."/>
            <person name="Suzuki O."/>
            <person name="Nakagawa S."/>
            <person name="Senoh A."/>
            <person name="Mizoguchi H."/>
            <person name="Goto Y."/>
            <person name="Shimizu F."/>
            <person name="Wakebe H."/>
            <person name="Hishigaki H."/>
            <person name="Watanabe T."/>
            <person name="Sugiyama A."/>
            <person name="Takemoto M."/>
            <person name="Kawakami B."/>
            <person name="Yamazaki M."/>
            <person name="Watanabe K."/>
            <person name="Kumagai A."/>
            <person name="Itakura S."/>
            <person name="Fukuzumi Y."/>
            <person name="Fujimori Y."/>
            <person name="Komiyama M."/>
            <person name="Tashiro H."/>
            <person name="Tanigami A."/>
            <person name="Fujiwara T."/>
            <person name="Ono T."/>
            <person name="Yamada K."/>
            <person name="Fujii Y."/>
            <person name="Ozaki K."/>
            <person name="Hirao M."/>
            <person name="Ohmori Y."/>
            <person name="Kawabata A."/>
            <person name="Hikiji T."/>
            <person name="Kobatake N."/>
            <person name="Inagaki H."/>
            <person name="Ikema Y."/>
            <person name="Okamoto S."/>
            <person name="Okitani R."/>
            <person name="Kawakami T."/>
            <person name="Noguchi S."/>
            <person name="Itoh T."/>
            <person name="Shigeta K."/>
            <person name="Senba T."/>
            <person name="Matsumura K."/>
            <person name="Nakajima Y."/>
            <person name="Mizuno T."/>
            <person name="Morinaga M."/>
            <person name="Sasaki M."/>
            <person name="Togashi T."/>
            <person name="Oyama M."/>
            <person name="Hata H."/>
            <person name="Watanabe M."/>
            <person name="Komatsu T."/>
            <person name="Mizushima-Sugano J."/>
            <person name="Satoh T."/>
            <person name="Shirai Y."/>
            <person name="Takahashi Y."/>
            <person name="Nakagawa K."/>
            <person name="Okumura K."/>
            <person name="Nagase T."/>
            <person name="Nomura N."/>
            <person name="Kikuchi H."/>
            <person name="Masuho Y."/>
            <person name="Yamashita R."/>
            <person name="Nakai K."/>
            <person name="Yada T."/>
            <person name="Nakamura Y."/>
            <person name="Ohara O."/>
            <person name="Isogai T."/>
            <person name="Sugano S."/>
        </authorList>
    </citation>
    <scope>NUCLEOTIDE SEQUENCE [LARGE SCALE MRNA] (ISOFORM 2)</scope>
</reference>
<reference key="4">
    <citation type="journal article" date="2004" name="Nature">
        <title>DNA sequence and analysis of human chromosome 9.</title>
        <authorList>
            <person name="Humphray S.J."/>
            <person name="Oliver K."/>
            <person name="Hunt A.R."/>
            <person name="Plumb R.W."/>
            <person name="Loveland J.E."/>
            <person name="Howe K.L."/>
            <person name="Andrews T.D."/>
            <person name="Searle S."/>
            <person name="Hunt S.E."/>
            <person name="Scott C.E."/>
            <person name="Jones M.C."/>
            <person name="Ainscough R."/>
            <person name="Almeida J.P."/>
            <person name="Ambrose K.D."/>
            <person name="Ashwell R.I.S."/>
            <person name="Babbage A.K."/>
            <person name="Babbage S."/>
            <person name="Bagguley C.L."/>
            <person name="Bailey J."/>
            <person name="Banerjee R."/>
            <person name="Barker D.J."/>
            <person name="Barlow K.F."/>
            <person name="Bates K."/>
            <person name="Beasley H."/>
            <person name="Beasley O."/>
            <person name="Bird C.P."/>
            <person name="Bray-Allen S."/>
            <person name="Brown A.J."/>
            <person name="Brown J.Y."/>
            <person name="Burford D."/>
            <person name="Burrill W."/>
            <person name="Burton J."/>
            <person name="Carder C."/>
            <person name="Carter N.P."/>
            <person name="Chapman J.C."/>
            <person name="Chen Y."/>
            <person name="Clarke G."/>
            <person name="Clark S.Y."/>
            <person name="Clee C.M."/>
            <person name="Clegg S."/>
            <person name="Collier R.E."/>
            <person name="Corby N."/>
            <person name="Crosier M."/>
            <person name="Cummings A.T."/>
            <person name="Davies J."/>
            <person name="Dhami P."/>
            <person name="Dunn M."/>
            <person name="Dutta I."/>
            <person name="Dyer L.W."/>
            <person name="Earthrowl M.E."/>
            <person name="Faulkner L."/>
            <person name="Fleming C.J."/>
            <person name="Frankish A."/>
            <person name="Frankland J.A."/>
            <person name="French L."/>
            <person name="Fricker D.G."/>
            <person name="Garner P."/>
            <person name="Garnett J."/>
            <person name="Ghori J."/>
            <person name="Gilbert J.G.R."/>
            <person name="Glison C."/>
            <person name="Grafham D.V."/>
            <person name="Gribble S."/>
            <person name="Griffiths C."/>
            <person name="Griffiths-Jones S."/>
            <person name="Grocock R."/>
            <person name="Guy J."/>
            <person name="Hall R.E."/>
            <person name="Hammond S."/>
            <person name="Harley J.L."/>
            <person name="Harrison E.S.I."/>
            <person name="Hart E.A."/>
            <person name="Heath P.D."/>
            <person name="Henderson C.D."/>
            <person name="Hopkins B.L."/>
            <person name="Howard P.J."/>
            <person name="Howden P.J."/>
            <person name="Huckle E."/>
            <person name="Johnson C."/>
            <person name="Johnson D."/>
            <person name="Joy A.A."/>
            <person name="Kay M."/>
            <person name="Keenan S."/>
            <person name="Kershaw J.K."/>
            <person name="Kimberley A.M."/>
            <person name="King A."/>
            <person name="Knights A."/>
            <person name="Laird G.K."/>
            <person name="Langford C."/>
            <person name="Lawlor S."/>
            <person name="Leongamornlert D.A."/>
            <person name="Leversha M."/>
            <person name="Lloyd C."/>
            <person name="Lloyd D.M."/>
            <person name="Lovell J."/>
            <person name="Martin S."/>
            <person name="Mashreghi-Mohammadi M."/>
            <person name="Matthews L."/>
            <person name="McLaren S."/>
            <person name="McLay K.E."/>
            <person name="McMurray A."/>
            <person name="Milne S."/>
            <person name="Nickerson T."/>
            <person name="Nisbett J."/>
            <person name="Nordsiek G."/>
            <person name="Pearce A.V."/>
            <person name="Peck A.I."/>
            <person name="Porter K.M."/>
            <person name="Pandian R."/>
            <person name="Pelan S."/>
            <person name="Phillimore B."/>
            <person name="Povey S."/>
            <person name="Ramsey Y."/>
            <person name="Rand V."/>
            <person name="Scharfe M."/>
            <person name="Sehra H.K."/>
            <person name="Shownkeen R."/>
            <person name="Sims S.K."/>
            <person name="Skuce C.D."/>
            <person name="Smith M."/>
            <person name="Steward C.A."/>
            <person name="Swarbreck D."/>
            <person name="Sycamore N."/>
            <person name="Tester J."/>
            <person name="Thorpe A."/>
            <person name="Tracey A."/>
            <person name="Tromans A."/>
            <person name="Thomas D.W."/>
            <person name="Wall M."/>
            <person name="Wallis J.M."/>
            <person name="West A.P."/>
            <person name="Whitehead S.L."/>
            <person name="Willey D.L."/>
            <person name="Williams S.A."/>
            <person name="Wilming L."/>
            <person name="Wray P.W."/>
            <person name="Young L."/>
            <person name="Ashurst J.L."/>
            <person name="Coulson A."/>
            <person name="Blocker H."/>
            <person name="Durbin R.M."/>
            <person name="Sulston J.E."/>
            <person name="Hubbard T."/>
            <person name="Jackson M.J."/>
            <person name="Bentley D.R."/>
            <person name="Beck S."/>
            <person name="Rogers J."/>
            <person name="Dunham I."/>
        </authorList>
    </citation>
    <scope>NUCLEOTIDE SEQUENCE [LARGE SCALE GENOMIC DNA]</scope>
</reference>
<reference key="5">
    <citation type="submission" date="2005-09" db="EMBL/GenBank/DDBJ databases">
        <authorList>
            <person name="Mural R.J."/>
            <person name="Istrail S."/>
            <person name="Sutton G.G."/>
            <person name="Florea L."/>
            <person name="Halpern A.L."/>
            <person name="Mobarry C.M."/>
            <person name="Lippert R."/>
            <person name="Walenz B."/>
            <person name="Shatkay H."/>
            <person name="Dew I."/>
            <person name="Miller J.R."/>
            <person name="Flanigan M.J."/>
            <person name="Edwards N.J."/>
            <person name="Bolanos R."/>
            <person name="Fasulo D."/>
            <person name="Halldorsson B.V."/>
            <person name="Hannenhalli S."/>
            <person name="Turner R."/>
            <person name="Yooseph S."/>
            <person name="Lu F."/>
            <person name="Nusskern D.R."/>
            <person name="Shue B.C."/>
            <person name="Zheng X.H."/>
            <person name="Zhong F."/>
            <person name="Delcher A.L."/>
            <person name="Huson D.H."/>
            <person name="Kravitz S.A."/>
            <person name="Mouchard L."/>
            <person name="Reinert K."/>
            <person name="Remington K.A."/>
            <person name="Clark A.G."/>
            <person name="Waterman M.S."/>
            <person name="Eichler E.E."/>
            <person name="Adams M.D."/>
            <person name="Hunkapiller M.W."/>
            <person name="Myers E.W."/>
            <person name="Venter J.C."/>
        </authorList>
    </citation>
    <scope>NUCLEOTIDE SEQUENCE [LARGE SCALE GENOMIC DNA]</scope>
</reference>
<reference key="6">
    <citation type="journal article" date="2004" name="Genome Res.">
        <title>The status, quality, and expansion of the NIH full-length cDNA project: the Mammalian Gene Collection (MGC).</title>
        <authorList>
            <consortium name="The MGC Project Team"/>
        </authorList>
    </citation>
    <scope>NUCLEOTIDE SEQUENCE [LARGE SCALE MRNA] (ISOFORMS 2 AND 3)</scope>
    <source>
        <tissue>Brain</tissue>
    </source>
</reference>
<reference key="7">
    <citation type="journal article" date="2005" name="Carcinogenesis">
        <title>Role of a novel EGF-like domain-containing gene NGX6 in cell adhesion modulation in nasopharyngeal carcinoma cells.</title>
        <authorList>
            <person name="Ma J."/>
            <person name="Zhou J."/>
            <person name="Fan S."/>
            <person name="Wang L.-L."/>
            <person name="Li X.-L."/>
            <person name="Yan Q."/>
            <person name="Zhou M."/>
            <person name="Liu H.-Y."/>
            <person name="Zhang Q."/>
            <person name="Zhou H."/>
            <person name="Gan K."/>
            <person name="Li Z."/>
            <person name="Peng C."/>
            <person name="Xiong W."/>
            <person name="Tan C."/>
            <person name="Shen S.-R."/>
            <person name="Yang J."/>
            <person name="Li J."/>
            <person name="Li G.-Y."/>
        </authorList>
    </citation>
    <scope>FUNCTION</scope>
    <scope>INTERACTION WITH EZR</scope>
    <scope>SUBCELLULAR LOCATION</scope>
    <scope>GLYCOSYLATION</scope>
    <scope>INDUCTION</scope>
</reference>
<reference key="8">
    <citation type="journal article" date="2005" name="J. Cell. Biochem.">
        <title>NGX6 gene inhibits cell proliferation and plays a negative role in EGFR pathway in nasopharyngeal carcinoma cells.</title>
        <authorList>
            <person name="Wang L.-L."/>
            <person name="Ma J."/>
            <person name="Li J."/>
            <person name="Li X.-L."/>
            <person name="Zhang Q."/>
            <person name="Peng S.-P."/>
            <person name="Peng C."/>
            <person name="Zhou M."/>
            <person name="Xiong W."/>
            <person name="Yang J."/>
            <person name="Zhou J."/>
            <person name="Fan S."/>
            <person name="Tan C."/>
            <person name="Yan Q."/>
            <person name="Shen S.-R."/>
            <person name="Li G.-Y."/>
        </authorList>
    </citation>
    <scope>FUNCTION</scope>
</reference>
<reference key="9">
    <citation type="journal article" date="2006" name="Oncology">
        <title>The role of NGX6 and its deletion mutants in the proliferation, adhesion and migration of nasopharyngeal carcinoma 5-8F cells.</title>
        <authorList>
            <person name="Peng S.P."/>
            <person name="Li X.-L."/>
            <person name="Wang L."/>
            <person name="Ou-Yang J."/>
            <person name="Ma J."/>
            <person name="Wang L.-L."/>
            <person name="Liu H.-Y."/>
            <person name="Zhou M."/>
            <person name="Tang Y.-L."/>
            <person name="Li W.-S."/>
            <person name="Luo X.-M."/>
            <person name="Cao L."/>
            <person name="Tang K."/>
            <person name="Shen S.-R."/>
            <person name="Li G.-Y."/>
        </authorList>
    </citation>
    <scope>FUNCTION</scope>
    <scope>SUBCELLULAR LOCATION</scope>
</reference>
<reference key="10">
    <citation type="journal article" date="2007" name="Cancer Sci.">
        <title>The expression of ezrin in NPC and its interaction with NGX6, a novel candidate suppressor.</title>
        <authorList>
            <person name="Peng S.-P."/>
            <person name="Fan S."/>
            <person name="Li X.-L."/>
            <person name="Wang L."/>
            <person name="Liu H.-Y."/>
            <person name="Zhou M."/>
            <person name="Wang L.-L."/>
            <person name="Shen S.-R."/>
            <person name="Li G.-Y."/>
        </authorList>
    </citation>
    <scope>FUNCTION</scope>
    <scope>INTERACTION WITH EZR</scope>
</reference>
<sequence>MNMPQSLGNQPLPPEPPSLGTPAEGPGTTSPPEHCWPVRPTLRNELDTFSVHFYIFFGPSVALPPERPAVFAMRLLPVLDSGGVLSLELQLNASSVRQENVTVFGCLTHEVPLSLGDAAVTCSKESLAGFLLSVSATTRVARLRIPFPQTGTWFLALRSLCGVGPRFVRCRNATAEVRMRTFLSPCVDDCGPYGQCKLLRTHNYLYAACECKAGWRGWGCTDSADALTYGFQLLSTLLLCLSNLMFLPPVVLAIRSRYVLEAAVYTFTMFFSTFYHACDQPGIVVFCIMDYDVLQFCDFLGSLMSVWVTVIAMARLQPVVKQVLYLLGAMLLSMALQLDRHGLWNLLGPSLFALGILATAWTVRSVRRRHCYPPTWRRWLFYLCPGSLIAGSAVLLYAFVETRDNYFYIHSIWHMLIAGSVGFLLPPRAKTDHGVPSGARARGCGYQLCINEQEELGLVGPGGATVSSICAS</sequence>
<feature type="chain" id="PRO_0000333039" description="Transmembrane protein 8B">
    <location>
        <begin position="1"/>
        <end position="472"/>
    </location>
</feature>
<feature type="topological domain" description="Extracellular" evidence="2">
    <location>
        <begin position="1"/>
        <end position="233"/>
    </location>
</feature>
<feature type="transmembrane region" description="Helical" evidence="2">
    <location>
        <begin position="234"/>
        <end position="254"/>
    </location>
</feature>
<feature type="topological domain" description="Cytoplasmic" evidence="2">
    <location>
        <begin position="255"/>
        <end position="257"/>
    </location>
</feature>
<feature type="transmembrane region" description="Helical" evidence="2">
    <location>
        <begin position="258"/>
        <end position="277"/>
    </location>
</feature>
<feature type="topological domain" description="Extracellular" evidence="2">
    <location>
        <begin position="278"/>
        <end position="292"/>
    </location>
</feature>
<feature type="transmembrane region" description="Helical" evidence="2">
    <location>
        <begin position="293"/>
        <end position="313"/>
    </location>
</feature>
<feature type="topological domain" description="Cytoplasmic" evidence="2">
    <location>
        <begin position="314"/>
        <end position="315"/>
    </location>
</feature>
<feature type="transmembrane region" description="Helical" evidence="2">
    <location>
        <begin position="316"/>
        <end position="336"/>
    </location>
</feature>
<feature type="topological domain" description="Extracellular" evidence="2">
    <location>
        <begin position="337"/>
        <end position="342"/>
    </location>
</feature>
<feature type="transmembrane region" description="Helical" evidence="2">
    <location>
        <begin position="343"/>
        <end position="363"/>
    </location>
</feature>
<feature type="topological domain" description="Cytoplasmic" evidence="2">
    <location>
        <begin position="364"/>
        <end position="379"/>
    </location>
</feature>
<feature type="transmembrane region" description="Helical" evidence="2">
    <location>
        <begin position="380"/>
        <end position="400"/>
    </location>
</feature>
<feature type="topological domain" description="Extracellular" evidence="2">
    <location>
        <begin position="401"/>
        <end position="405"/>
    </location>
</feature>
<feature type="transmembrane region" description="Helical" evidence="2">
    <location>
        <begin position="406"/>
        <end position="426"/>
    </location>
</feature>
<feature type="topological domain" description="Cytoplasmic" evidence="2">
    <location>
        <begin position="427"/>
        <end position="472"/>
    </location>
</feature>
<feature type="domain" description="EGF-like">
    <location>
        <begin position="182"/>
        <end position="221"/>
    </location>
</feature>
<feature type="region of interest" description="Disordered" evidence="3">
    <location>
        <begin position="1"/>
        <end position="36"/>
    </location>
</feature>
<feature type="glycosylation site" description="N-linked (GlcNAc...) asparagine" evidence="2">
    <location>
        <position position="92"/>
    </location>
</feature>
<feature type="glycosylation site" description="N-linked (GlcNAc...) asparagine" evidence="2">
    <location>
        <position position="100"/>
    </location>
</feature>
<feature type="disulfide bond" evidence="1">
    <location>
        <begin position="186"/>
        <end position="196"/>
    </location>
</feature>
<feature type="disulfide bond" evidence="1">
    <location>
        <begin position="190"/>
        <end position="209"/>
    </location>
</feature>
<feature type="disulfide bond" evidence="1">
    <location>
        <begin position="211"/>
        <end position="220"/>
    </location>
</feature>
<feature type="splice variant" id="VSP_033450" description="In isoform 3." evidence="10">
    <location>
        <begin position="1"/>
        <end position="81"/>
    </location>
</feature>
<feature type="splice variant" id="VSP_033451" description="In isoform 3." evidence="10">
    <original>GGVLSLELQLNA</original>
    <variation>MWRPHFHTCPPQ</variation>
    <location>
        <begin position="82"/>
        <end position="93"/>
    </location>
</feature>
<feature type="splice variant" id="VSP_033452" description="In isoform 2 and isoform 3." evidence="8 9 10 11">
    <original>FYHACDQPGIVVFCIMDYDVLQFCDFLGSLMSVWVTVIAMARLQPVVKQVLYLLGAMLLSMALQ</original>
    <variation>VCGGVCILSLGACAWWWVTVCISTTFSEGLGMSVPSLCLLQTETAVLPKLSCIDNGHFCKTHWSK</variation>
    <location>
        <begin position="274"/>
        <end position="337"/>
    </location>
</feature>
<feature type="splice variant" id="VSP_033453" description="In isoform 2 and isoform 3." evidence="8 9 10 11">
    <location>
        <begin position="338"/>
        <end position="472"/>
    </location>
</feature>
<feature type="sequence conflict" description="In Ref. 6; AAH98296." evidence="12" ref="6">
    <original>R</original>
    <variation>W</variation>
    <location>
        <position position="178"/>
    </location>
</feature>
<evidence type="ECO:0000250" key="1"/>
<evidence type="ECO:0000255" key="2"/>
<evidence type="ECO:0000256" key="3">
    <source>
        <dbReference type="SAM" id="MobiDB-lite"/>
    </source>
</evidence>
<evidence type="ECO:0000269" key="4">
    <source>
    </source>
</evidence>
<evidence type="ECO:0000269" key="5">
    <source>
    </source>
</evidence>
<evidence type="ECO:0000269" key="6">
    <source>
    </source>
</evidence>
<evidence type="ECO:0000269" key="7">
    <source>
    </source>
</evidence>
<evidence type="ECO:0000303" key="8">
    <source>
    </source>
</evidence>
<evidence type="ECO:0000303" key="9">
    <source>
    </source>
</evidence>
<evidence type="ECO:0000303" key="10">
    <source>
    </source>
</evidence>
<evidence type="ECO:0000303" key="11">
    <source ref="2"/>
</evidence>
<evidence type="ECO:0000305" key="12"/>
<keyword id="KW-0025">Alternative splicing</keyword>
<keyword id="KW-0130">Cell adhesion</keyword>
<keyword id="KW-1003">Cell membrane</keyword>
<keyword id="KW-0963">Cytoplasm</keyword>
<keyword id="KW-1015">Disulfide bond</keyword>
<keyword id="KW-0245">EGF-like domain</keyword>
<keyword id="KW-0256">Endoplasmic reticulum</keyword>
<keyword id="KW-0325">Glycoprotein</keyword>
<keyword id="KW-0341">Growth regulation</keyword>
<keyword id="KW-0472">Membrane</keyword>
<keyword id="KW-0496">Mitochondrion</keyword>
<keyword id="KW-0539">Nucleus</keyword>
<keyword id="KW-1185">Reference proteome</keyword>
<keyword id="KW-0812">Transmembrane</keyword>
<keyword id="KW-1133">Transmembrane helix</keyword>
<comment type="function">
    <text evidence="4 5 6 7">May function as a regulator of the EGFR pathway. Probable tumor suppressor which may function in cell growth, proliferation and adhesion.</text>
</comment>
<comment type="subunit">
    <text evidence="4 6">Isoform 2 (via its cytoplasmic part) interacts with EZR.</text>
</comment>
<comment type="subcellular location">
    <molecule>Isoform 2</molecule>
    <subcellularLocation>
        <location evidence="7">Cell membrane</location>
        <topology evidence="7">Multi-pass membrane protein</topology>
    </subcellularLocation>
    <subcellularLocation>
        <location evidence="7">Cytoplasm</location>
    </subcellularLocation>
    <subcellularLocation>
        <location evidence="7">Nucleus</location>
    </subcellularLocation>
    <subcellularLocation>
        <location evidence="7">Mitochondrion</location>
    </subcellularLocation>
    <subcellularLocation>
        <location evidence="7">Endoplasmic reticulum</location>
    </subcellularLocation>
    <text>Also detected in mitochondrion and endoplasmic reticulum (PubMed:17641538).</text>
</comment>
<comment type="alternative products">
    <event type="alternative splicing"/>
    <isoform>
        <id>A6NDV4-1</id>
        <name>1</name>
        <sequence type="displayed"/>
    </isoform>
    <isoform>
        <id>A6NDV4-2</id>
        <name>2</name>
        <sequence type="described" ref="VSP_033452 VSP_033453"/>
    </isoform>
    <isoform>
        <id>A6NDV4-3</id>
        <name>3</name>
        <sequence type="described" ref="VSP_033450 VSP_033451 VSP_033452 VSP_033453"/>
    </isoform>
</comment>
<comment type="induction">
    <text evidence="4">Isoform 2 is down-regulated in nasopharyngeal carcinoma cells.</text>
</comment>
<comment type="PTM">
    <text evidence="4">Isoform 2 is N-glycosylated.</text>
</comment>
<comment type="similarity">
    <text evidence="12">Belongs to the TMEM8 family.</text>
</comment>
<comment type="sequence caution" evidence="12">
    <conflict type="erroneous initiation">
        <sequence resource="EMBL-CDS" id="AAC28644"/>
    </conflict>
</comment>
<comment type="sequence caution" evidence="12">
    <conflict type="erroneous initiation">
        <sequence resource="EMBL-CDS" id="AAF34820"/>
    </conflict>
    <text>Extended N-terminus.</text>
</comment>
<comment type="sequence caution" evidence="12">
    <conflict type="miscellaneous discrepancy">
        <sequence resource="EMBL-CDS" id="AAF34820"/>
    </conflict>
    <text>Contaminating sequence. Sequence of unknown origin in the N-terminal part.</text>
</comment>
<protein>
    <recommendedName>
        <fullName>Transmembrane protein 8B</fullName>
    </recommendedName>
    <alternativeName>
        <fullName>Nasopharyngeal carcinoma-associated gene 6 protein</fullName>
    </alternativeName>
    <alternativeName>
        <fullName>Protein NAG-5</fullName>
    </alternativeName>
    <alternativeName>
        <fullName>Protein NGX6</fullName>
    </alternativeName>
</protein>
<organism>
    <name type="scientific">Homo sapiens</name>
    <name type="common">Human</name>
    <dbReference type="NCBI Taxonomy" id="9606"/>
    <lineage>
        <taxon>Eukaryota</taxon>
        <taxon>Metazoa</taxon>
        <taxon>Chordata</taxon>
        <taxon>Craniata</taxon>
        <taxon>Vertebrata</taxon>
        <taxon>Euteleostomi</taxon>
        <taxon>Mammalia</taxon>
        <taxon>Eutheria</taxon>
        <taxon>Euarchontoglires</taxon>
        <taxon>Primates</taxon>
        <taxon>Haplorrhini</taxon>
        <taxon>Catarrhini</taxon>
        <taxon>Hominidae</taxon>
        <taxon>Homo</taxon>
    </lineage>
</organism>